<evidence type="ECO:0000250" key="1">
    <source>
        <dbReference type="UniProtKB" id="Q6YN16"/>
    </source>
</evidence>
<evidence type="ECO:0000255" key="2"/>
<evidence type="ECO:0000305" key="3"/>
<feature type="chain" id="PRO_0000319893" description="Hydroxysteroid dehydrogenase-like protein 2">
    <location>
        <begin position="1"/>
        <end position="417"/>
    </location>
</feature>
<feature type="domain" description="SCP2">
    <location>
        <begin position="306"/>
        <end position="414"/>
    </location>
</feature>
<feature type="active site" description="Proton acceptor" evidence="2">
    <location>
        <position position="168"/>
    </location>
</feature>
<feature type="binding site" evidence="1">
    <location>
        <begin position="17"/>
        <end position="23"/>
    </location>
    <ligand>
        <name>NADP(+)</name>
        <dbReference type="ChEBI" id="CHEBI:58349"/>
    </ligand>
</feature>
<feature type="binding site" evidence="1">
    <location>
        <position position="42"/>
    </location>
    <ligand>
        <name>NADP(+)</name>
        <dbReference type="ChEBI" id="CHEBI:58349"/>
    </ligand>
</feature>
<feature type="binding site" evidence="1">
    <location>
        <position position="74"/>
    </location>
    <ligand>
        <name>NADP(+)</name>
        <dbReference type="ChEBI" id="CHEBI:58349"/>
    </ligand>
</feature>
<feature type="binding site" evidence="1">
    <location>
        <position position="172"/>
    </location>
    <ligand>
        <name>NADP(+)</name>
        <dbReference type="ChEBI" id="CHEBI:58349"/>
    </ligand>
</feature>
<name>HSDL2_XENLA</name>
<comment type="function">
    <text evidence="1">Has apparently no steroid dehydrogenase activity. Might act as a metabolic regulator that affects systemic adaptation to nutritional cues.</text>
</comment>
<comment type="subcellular location">
    <subcellularLocation>
        <location evidence="1">Peroxisome</location>
    </subcellularLocation>
    <subcellularLocation>
        <location evidence="1">Mitochondrion</location>
    </subcellularLocation>
</comment>
<comment type="similarity">
    <text evidence="3">Belongs to the short-chain dehydrogenases/reductases (SDR) family.</text>
</comment>
<sequence length="417" mass="44560">MLPNTGKLAGCTLFITGASRGIGKAIALKAARDGANIVVAAKTAEAHPKLPGTIYTAASEIEAAGGKALPCIVDVRDENQISAAVEKAVDAFGGIDILVNNASAISLTNTLETSMKKVDLMMGINTRGTYLTSKICIPYLKKSKVAHILNLSPPLNLNPMWFKNHCAYTIAKYGMSMCALGMSEEYKGEIAVNALWPKTAIHTAAMDMLGGSGVDKQCRKPDIMADAAYAILTKTKDFTGNFVIDEELLQQEGIKDLDVYAISPGHPLLPDFFLDESPETLASAMEEHGATAAFKAGKKQAKSQDASPLQETFKAIERSVNEEAVKSTQGIYQFVLSGEESGNWFLDLKNDKGGVGKGEPSTKADVVMSMDSGDFIKMFAGKMKPTMAFMSGKLKIKGDMGLALKLEKILGQMNAKL</sequence>
<accession>Q6PAY8</accession>
<reference key="1">
    <citation type="submission" date="2003-10" db="EMBL/GenBank/DDBJ databases">
        <authorList>
            <consortium name="NIH - Xenopus Gene Collection (XGC) project"/>
        </authorList>
    </citation>
    <scope>NUCLEOTIDE SEQUENCE [LARGE SCALE MRNA]</scope>
    <source>
        <tissue>Kidney</tissue>
    </source>
</reference>
<proteinExistence type="evidence at transcript level"/>
<dbReference type="EC" id="1.-.-.-"/>
<dbReference type="EMBL" id="BC059996">
    <property type="protein sequence ID" value="AAH59996.1"/>
    <property type="molecule type" value="mRNA"/>
</dbReference>
<dbReference type="RefSeq" id="NP_001083285.1">
    <property type="nucleotide sequence ID" value="NM_001089816.1"/>
</dbReference>
<dbReference type="RefSeq" id="XP_018095304.1">
    <property type="nucleotide sequence ID" value="XM_018239815.1"/>
</dbReference>
<dbReference type="SMR" id="Q6PAY8"/>
<dbReference type="IntAct" id="Q6PAY8">
    <property type="interactions" value="2"/>
</dbReference>
<dbReference type="DNASU" id="398845"/>
<dbReference type="GeneID" id="398845"/>
<dbReference type="KEGG" id="xla:398845"/>
<dbReference type="AGR" id="Xenbase:XB-GENE-5753420"/>
<dbReference type="CTD" id="398845"/>
<dbReference type="OrthoDB" id="5327538at2759"/>
<dbReference type="CD-CODE" id="78E86D56">
    <property type="entry name" value="Mitochondrial cloud"/>
</dbReference>
<dbReference type="Proteomes" id="UP000186698">
    <property type="component" value="Chromosome 1S"/>
</dbReference>
<dbReference type="Bgee" id="398845">
    <property type="expression patterns" value="Expressed in muscle tissue and 19 other cell types or tissues"/>
</dbReference>
<dbReference type="GO" id="GO:0005739">
    <property type="term" value="C:mitochondrion"/>
    <property type="evidence" value="ECO:0000250"/>
    <property type="project" value="UniProtKB"/>
</dbReference>
<dbReference type="GO" id="GO:0005777">
    <property type="term" value="C:peroxisome"/>
    <property type="evidence" value="ECO:0007669"/>
    <property type="project" value="UniProtKB-SubCell"/>
</dbReference>
<dbReference type="GO" id="GO:0016491">
    <property type="term" value="F:oxidoreductase activity"/>
    <property type="evidence" value="ECO:0007669"/>
    <property type="project" value="UniProtKB-KW"/>
</dbReference>
<dbReference type="CDD" id="cd09762">
    <property type="entry name" value="HSDL2_SDR_c"/>
    <property type="match status" value="1"/>
</dbReference>
<dbReference type="FunFam" id="3.40.50.720:FF:000301">
    <property type="entry name" value="Hydroxysteroid dehydrogenase like 2"/>
    <property type="match status" value="1"/>
</dbReference>
<dbReference type="Gene3D" id="3.40.50.720">
    <property type="entry name" value="NAD(P)-binding Rossmann-like Domain"/>
    <property type="match status" value="1"/>
</dbReference>
<dbReference type="Gene3D" id="3.30.1050.10">
    <property type="entry name" value="SCP2 sterol-binding domain"/>
    <property type="match status" value="1"/>
</dbReference>
<dbReference type="InterPro" id="IPR051935">
    <property type="entry name" value="HSDL2"/>
</dbReference>
<dbReference type="InterPro" id="IPR036291">
    <property type="entry name" value="NAD(P)-bd_dom_sf"/>
</dbReference>
<dbReference type="InterPro" id="IPR003033">
    <property type="entry name" value="SCP2_sterol-bd_dom"/>
</dbReference>
<dbReference type="InterPro" id="IPR036527">
    <property type="entry name" value="SCP2_sterol-bd_dom_sf"/>
</dbReference>
<dbReference type="InterPro" id="IPR002347">
    <property type="entry name" value="SDR_fam"/>
</dbReference>
<dbReference type="NCBIfam" id="NF006133">
    <property type="entry name" value="PRK08278.1"/>
    <property type="match status" value="1"/>
</dbReference>
<dbReference type="PANTHER" id="PTHR42808">
    <property type="entry name" value="HYDROXYSTEROID DEHYDROGENASE-LIKE PROTEIN 2"/>
    <property type="match status" value="1"/>
</dbReference>
<dbReference type="PANTHER" id="PTHR42808:SF3">
    <property type="entry name" value="HYDROXYSTEROID DEHYDROGENASE-LIKE PROTEIN 2"/>
    <property type="match status" value="1"/>
</dbReference>
<dbReference type="Pfam" id="PF00106">
    <property type="entry name" value="adh_short"/>
    <property type="match status" value="1"/>
</dbReference>
<dbReference type="Pfam" id="PF02036">
    <property type="entry name" value="SCP2"/>
    <property type="match status" value="1"/>
</dbReference>
<dbReference type="PRINTS" id="PR00081">
    <property type="entry name" value="GDHRDH"/>
</dbReference>
<dbReference type="SUPFAM" id="SSF51735">
    <property type="entry name" value="NAD(P)-binding Rossmann-fold domains"/>
    <property type="match status" value="1"/>
</dbReference>
<dbReference type="SUPFAM" id="SSF55718">
    <property type="entry name" value="SCP-like"/>
    <property type="match status" value="1"/>
</dbReference>
<organism>
    <name type="scientific">Xenopus laevis</name>
    <name type="common">African clawed frog</name>
    <dbReference type="NCBI Taxonomy" id="8355"/>
    <lineage>
        <taxon>Eukaryota</taxon>
        <taxon>Metazoa</taxon>
        <taxon>Chordata</taxon>
        <taxon>Craniata</taxon>
        <taxon>Vertebrata</taxon>
        <taxon>Euteleostomi</taxon>
        <taxon>Amphibia</taxon>
        <taxon>Batrachia</taxon>
        <taxon>Anura</taxon>
        <taxon>Pipoidea</taxon>
        <taxon>Pipidae</taxon>
        <taxon>Xenopodinae</taxon>
        <taxon>Xenopus</taxon>
        <taxon>Xenopus</taxon>
    </lineage>
</organism>
<keyword id="KW-0496">Mitochondrion</keyword>
<keyword id="KW-0521">NADP</keyword>
<keyword id="KW-0560">Oxidoreductase</keyword>
<keyword id="KW-0576">Peroxisome</keyword>
<keyword id="KW-1185">Reference proteome</keyword>
<gene>
    <name type="primary">hsdl2</name>
</gene>
<protein>
    <recommendedName>
        <fullName>Hydroxysteroid dehydrogenase-like protein 2</fullName>
        <ecNumber>1.-.-.-</ecNumber>
    </recommendedName>
</protein>